<name>RS7_MYCSS</name>
<reference key="1">
    <citation type="submission" date="2006-06" db="EMBL/GenBank/DDBJ databases">
        <title>Complete sequence of chromosome of Mycobacterium sp. MCS.</title>
        <authorList>
            <consortium name="US DOE Joint Genome Institute"/>
            <person name="Copeland A."/>
            <person name="Lucas S."/>
            <person name="Lapidus A."/>
            <person name="Barry K."/>
            <person name="Detter J.C."/>
            <person name="Glavina del Rio T."/>
            <person name="Hammon N."/>
            <person name="Israni S."/>
            <person name="Dalin E."/>
            <person name="Tice H."/>
            <person name="Pitluck S."/>
            <person name="Martinez M."/>
            <person name="Schmutz J."/>
            <person name="Larimer F."/>
            <person name="Land M."/>
            <person name="Hauser L."/>
            <person name="Kyrpides N."/>
            <person name="Kim E."/>
            <person name="Miller C.D."/>
            <person name="Hughes J.E."/>
            <person name="Anderson A.J."/>
            <person name="Sims R.C."/>
            <person name="Richardson P."/>
        </authorList>
    </citation>
    <scope>NUCLEOTIDE SEQUENCE [LARGE SCALE GENOMIC DNA]</scope>
    <source>
        <strain>MCS</strain>
    </source>
</reference>
<gene>
    <name evidence="1" type="primary">rpsG</name>
    <name type="ordered locus">Mmcs_0985</name>
</gene>
<organism>
    <name type="scientific">Mycobacterium sp. (strain MCS)</name>
    <dbReference type="NCBI Taxonomy" id="164756"/>
    <lineage>
        <taxon>Bacteria</taxon>
        <taxon>Bacillati</taxon>
        <taxon>Actinomycetota</taxon>
        <taxon>Actinomycetes</taxon>
        <taxon>Mycobacteriales</taxon>
        <taxon>Mycobacteriaceae</taxon>
        <taxon>Mycobacterium</taxon>
    </lineage>
</organism>
<protein>
    <recommendedName>
        <fullName evidence="1">Small ribosomal subunit protein uS7</fullName>
    </recommendedName>
    <alternativeName>
        <fullName evidence="2">30S ribosomal protein S7</fullName>
    </alternativeName>
</protein>
<sequence>MPRKGPAPKRPLVNDPVYGSQLVTQLVNKVLLDGKKSLAERIVYGALEQARDKTGTDPVVTLKRALDNVKPALEVRSRRVGGATYQVPVEVRPDRSVTLALRWLVSFSKARREKTMVERLANEILDASNGLGAAVKRREDTHKMAEANRAFAHYRW</sequence>
<feature type="chain" id="PRO_1000014237" description="Small ribosomal subunit protein uS7">
    <location>
        <begin position="1"/>
        <end position="156"/>
    </location>
</feature>
<proteinExistence type="inferred from homology"/>
<keyword id="KW-0687">Ribonucleoprotein</keyword>
<keyword id="KW-0689">Ribosomal protein</keyword>
<keyword id="KW-0694">RNA-binding</keyword>
<keyword id="KW-0699">rRNA-binding</keyword>
<keyword id="KW-0820">tRNA-binding</keyword>
<comment type="function">
    <text evidence="1">One of the primary rRNA binding proteins, it binds directly to 16S rRNA where it nucleates assembly of the head domain of the 30S subunit. Is located at the subunit interface close to the decoding center, probably blocks exit of the E-site tRNA.</text>
</comment>
<comment type="subunit">
    <text evidence="1">Part of the 30S ribosomal subunit. Contacts proteins S9 and S11.</text>
</comment>
<comment type="similarity">
    <text evidence="1">Belongs to the universal ribosomal protein uS7 family.</text>
</comment>
<dbReference type="EMBL" id="CP000384">
    <property type="protein sequence ID" value="ABG07099.1"/>
    <property type="molecule type" value="Genomic_DNA"/>
</dbReference>
<dbReference type="SMR" id="Q1BDD5"/>
<dbReference type="KEGG" id="mmc:Mmcs_0985"/>
<dbReference type="HOGENOM" id="CLU_072226_1_1_11"/>
<dbReference type="BioCyc" id="MSP164756:G1G6O-1009-MONOMER"/>
<dbReference type="GO" id="GO:0015935">
    <property type="term" value="C:small ribosomal subunit"/>
    <property type="evidence" value="ECO:0007669"/>
    <property type="project" value="InterPro"/>
</dbReference>
<dbReference type="GO" id="GO:0019843">
    <property type="term" value="F:rRNA binding"/>
    <property type="evidence" value="ECO:0007669"/>
    <property type="project" value="UniProtKB-UniRule"/>
</dbReference>
<dbReference type="GO" id="GO:0003735">
    <property type="term" value="F:structural constituent of ribosome"/>
    <property type="evidence" value="ECO:0007669"/>
    <property type="project" value="InterPro"/>
</dbReference>
<dbReference type="GO" id="GO:0000049">
    <property type="term" value="F:tRNA binding"/>
    <property type="evidence" value="ECO:0007669"/>
    <property type="project" value="UniProtKB-UniRule"/>
</dbReference>
<dbReference type="GO" id="GO:0006412">
    <property type="term" value="P:translation"/>
    <property type="evidence" value="ECO:0007669"/>
    <property type="project" value="UniProtKB-UniRule"/>
</dbReference>
<dbReference type="CDD" id="cd14869">
    <property type="entry name" value="uS7_Bacteria"/>
    <property type="match status" value="1"/>
</dbReference>
<dbReference type="FunFam" id="1.10.455.10:FF:000001">
    <property type="entry name" value="30S ribosomal protein S7"/>
    <property type="match status" value="1"/>
</dbReference>
<dbReference type="Gene3D" id="1.10.455.10">
    <property type="entry name" value="Ribosomal protein S7 domain"/>
    <property type="match status" value="1"/>
</dbReference>
<dbReference type="HAMAP" id="MF_00480_B">
    <property type="entry name" value="Ribosomal_uS7_B"/>
    <property type="match status" value="1"/>
</dbReference>
<dbReference type="InterPro" id="IPR000235">
    <property type="entry name" value="Ribosomal_uS7"/>
</dbReference>
<dbReference type="InterPro" id="IPR005717">
    <property type="entry name" value="Ribosomal_uS7_bac/org-type"/>
</dbReference>
<dbReference type="InterPro" id="IPR020606">
    <property type="entry name" value="Ribosomal_uS7_CS"/>
</dbReference>
<dbReference type="InterPro" id="IPR023798">
    <property type="entry name" value="Ribosomal_uS7_dom"/>
</dbReference>
<dbReference type="InterPro" id="IPR036823">
    <property type="entry name" value="Ribosomal_uS7_dom_sf"/>
</dbReference>
<dbReference type="NCBIfam" id="TIGR01029">
    <property type="entry name" value="rpsG_bact"/>
    <property type="match status" value="1"/>
</dbReference>
<dbReference type="PANTHER" id="PTHR11205">
    <property type="entry name" value="RIBOSOMAL PROTEIN S7"/>
    <property type="match status" value="1"/>
</dbReference>
<dbReference type="Pfam" id="PF00177">
    <property type="entry name" value="Ribosomal_S7"/>
    <property type="match status" value="1"/>
</dbReference>
<dbReference type="PIRSF" id="PIRSF002122">
    <property type="entry name" value="RPS7p_RPS7a_RPS5e_RPS7o"/>
    <property type="match status" value="1"/>
</dbReference>
<dbReference type="SUPFAM" id="SSF47973">
    <property type="entry name" value="Ribosomal protein S7"/>
    <property type="match status" value="1"/>
</dbReference>
<dbReference type="PROSITE" id="PS00052">
    <property type="entry name" value="RIBOSOMAL_S7"/>
    <property type="match status" value="1"/>
</dbReference>
<accession>Q1BDD5</accession>
<evidence type="ECO:0000255" key="1">
    <source>
        <dbReference type="HAMAP-Rule" id="MF_00480"/>
    </source>
</evidence>
<evidence type="ECO:0000305" key="2"/>